<keyword id="KW-0479">Metal-binding</keyword>
<keyword id="KW-0520">NAD</keyword>
<keyword id="KW-0521">NADP</keyword>
<keyword id="KW-0558">Oxidation</keyword>
<keyword id="KW-0560">Oxidoreductase</keyword>
<keyword id="KW-0630">Potassium</keyword>
<comment type="function">
    <text evidence="1">Involved in the biosynthesis of the osmoprotectant glycine betaine. Catalyzes the irreversible oxidation of betaine aldehyde to the corresponding acid.</text>
</comment>
<comment type="catalytic activity">
    <reaction evidence="1">
        <text>betaine aldehyde + NAD(+) + H2O = glycine betaine + NADH + 2 H(+)</text>
        <dbReference type="Rhea" id="RHEA:15305"/>
        <dbReference type="ChEBI" id="CHEBI:15377"/>
        <dbReference type="ChEBI" id="CHEBI:15378"/>
        <dbReference type="ChEBI" id="CHEBI:15710"/>
        <dbReference type="ChEBI" id="CHEBI:17750"/>
        <dbReference type="ChEBI" id="CHEBI:57540"/>
        <dbReference type="ChEBI" id="CHEBI:57945"/>
        <dbReference type="EC" id="1.2.1.8"/>
    </reaction>
    <physiologicalReaction direction="left-to-right" evidence="1">
        <dbReference type="Rhea" id="RHEA:15306"/>
    </physiologicalReaction>
</comment>
<comment type="cofactor">
    <cofactor evidence="1">
        <name>K(+)</name>
        <dbReference type="ChEBI" id="CHEBI:29103"/>
    </cofactor>
    <text evidence="1">Binds 2 potassium ions per subunit.</text>
</comment>
<comment type="pathway">
    <text evidence="1">Amine and polyamine biosynthesis; betaine biosynthesis via choline pathway; betaine from betaine aldehyde: step 1/1.</text>
</comment>
<comment type="subunit">
    <text evidence="1">Dimer of dimers.</text>
</comment>
<comment type="similarity">
    <text evidence="1">Belongs to the aldehyde dehydrogenase family.</text>
</comment>
<evidence type="ECO:0000255" key="1">
    <source>
        <dbReference type="HAMAP-Rule" id="MF_00804"/>
    </source>
</evidence>
<gene>
    <name evidence="1" type="primary">betB</name>
    <name type="ordered locus">Spro_1514</name>
</gene>
<reference key="1">
    <citation type="submission" date="2007-09" db="EMBL/GenBank/DDBJ databases">
        <title>Complete sequence of chromosome of Serratia proteamaculans 568.</title>
        <authorList>
            <consortium name="US DOE Joint Genome Institute"/>
            <person name="Copeland A."/>
            <person name="Lucas S."/>
            <person name="Lapidus A."/>
            <person name="Barry K."/>
            <person name="Glavina del Rio T."/>
            <person name="Dalin E."/>
            <person name="Tice H."/>
            <person name="Pitluck S."/>
            <person name="Chain P."/>
            <person name="Malfatti S."/>
            <person name="Shin M."/>
            <person name="Vergez L."/>
            <person name="Schmutz J."/>
            <person name="Larimer F."/>
            <person name="Land M."/>
            <person name="Hauser L."/>
            <person name="Kyrpides N."/>
            <person name="Kim E."/>
            <person name="Taghavi S."/>
            <person name="Newman L."/>
            <person name="Vangronsveld J."/>
            <person name="van der Lelie D."/>
            <person name="Richardson P."/>
        </authorList>
    </citation>
    <scope>NUCLEOTIDE SEQUENCE [LARGE SCALE GENOMIC DNA]</scope>
    <source>
        <strain>568</strain>
    </source>
</reference>
<name>BETB_SERP5</name>
<dbReference type="EC" id="1.2.1.8" evidence="1"/>
<dbReference type="EMBL" id="CP000826">
    <property type="protein sequence ID" value="ABV40618.1"/>
    <property type="molecule type" value="Genomic_DNA"/>
</dbReference>
<dbReference type="SMR" id="A8GBX8"/>
<dbReference type="STRING" id="399741.Spro_1514"/>
<dbReference type="KEGG" id="spe:Spro_1514"/>
<dbReference type="eggNOG" id="COG1012">
    <property type="taxonomic scope" value="Bacteria"/>
</dbReference>
<dbReference type="HOGENOM" id="CLU_005391_0_1_6"/>
<dbReference type="OrthoDB" id="9812625at2"/>
<dbReference type="UniPathway" id="UPA00529">
    <property type="reaction ID" value="UER00386"/>
</dbReference>
<dbReference type="GO" id="GO:0008802">
    <property type="term" value="F:betaine-aldehyde dehydrogenase (NAD+) activity"/>
    <property type="evidence" value="ECO:0007669"/>
    <property type="project" value="UniProtKB-UniRule"/>
</dbReference>
<dbReference type="GO" id="GO:0046872">
    <property type="term" value="F:metal ion binding"/>
    <property type="evidence" value="ECO:0007669"/>
    <property type="project" value="UniProtKB-KW"/>
</dbReference>
<dbReference type="GO" id="GO:0019285">
    <property type="term" value="P:glycine betaine biosynthetic process from choline"/>
    <property type="evidence" value="ECO:0007669"/>
    <property type="project" value="UniProtKB-UniRule"/>
</dbReference>
<dbReference type="CDD" id="cd07090">
    <property type="entry name" value="ALDH_F9_TMBADH"/>
    <property type="match status" value="1"/>
</dbReference>
<dbReference type="FunFam" id="3.40.309.10:FF:000014">
    <property type="entry name" value="NAD/NADP-dependent betaine aldehyde dehydrogenase"/>
    <property type="match status" value="1"/>
</dbReference>
<dbReference type="FunFam" id="3.40.605.10:FF:000007">
    <property type="entry name" value="NAD/NADP-dependent betaine aldehyde dehydrogenase"/>
    <property type="match status" value="1"/>
</dbReference>
<dbReference type="Gene3D" id="3.40.605.10">
    <property type="entry name" value="Aldehyde Dehydrogenase, Chain A, domain 1"/>
    <property type="match status" value="1"/>
</dbReference>
<dbReference type="Gene3D" id="3.40.309.10">
    <property type="entry name" value="Aldehyde Dehydrogenase, Chain A, domain 2"/>
    <property type="match status" value="1"/>
</dbReference>
<dbReference type="HAMAP" id="MF_00804">
    <property type="entry name" value="BADH"/>
    <property type="match status" value="1"/>
</dbReference>
<dbReference type="InterPro" id="IPR016161">
    <property type="entry name" value="Ald_DH/histidinol_DH"/>
</dbReference>
<dbReference type="InterPro" id="IPR016163">
    <property type="entry name" value="Ald_DH_C"/>
</dbReference>
<dbReference type="InterPro" id="IPR016160">
    <property type="entry name" value="Ald_DH_CS_CYS"/>
</dbReference>
<dbReference type="InterPro" id="IPR029510">
    <property type="entry name" value="Ald_DH_CS_GLU"/>
</dbReference>
<dbReference type="InterPro" id="IPR016162">
    <property type="entry name" value="Ald_DH_N"/>
</dbReference>
<dbReference type="InterPro" id="IPR015590">
    <property type="entry name" value="Aldehyde_DH_dom"/>
</dbReference>
<dbReference type="InterPro" id="IPR011264">
    <property type="entry name" value="BADH"/>
</dbReference>
<dbReference type="NCBIfam" id="TIGR01804">
    <property type="entry name" value="BADH"/>
    <property type="match status" value="1"/>
</dbReference>
<dbReference type="NCBIfam" id="NF009725">
    <property type="entry name" value="PRK13252.1"/>
    <property type="match status" value="1"/>
</dbReference>
<dbReference type="PANTHER" id="PTHR11699">
    <property type="entry name" value="ALDEHYDE DEHYDROGENASE-RELATED"/>
    <property type="match status" value="1"/>
</dbReference>
<dbReference type="Pfam" id="PF00171">
    <property type="entry name" value="Aldedh"/>
    <property type="match status" value="1"/>
</dbReference>
<dbReference type="SUPFAM" id="SSF53720">
    <property type="entry name" value="ALDH-like"/>
    <property type="match status" value="1"/>
</dbReference>
<dbReference type="PROSITE" id="PS00070">
    <property type="entry name" value="ALDEHYDE_DEHYDR_CYS"/>
    <property type="match status" value="1"/>
</dbReference>
<dbReference type="PROSITE" id="PS00687">
    <property type="entry name" value="ALDEHYDE_DEHYDR_GLU"/>
    <property type="match status" value="1"/>
</dbReference>
<proteinExistence type="inferred from homology"/>
<organism>
    <name type="scientific">Serratia proteamaculans (strain 568)</name>
    <dbReference type="NCBI Taxonomy" id="399741"/>
    <lineage>
        <taxon>Bacteria</taxon>
        <taxon>Pseudomonadati</taxon>
        <taxon>Pseudomonadota</taxon>
        <taxon>Gammaproteobacteria</taxon>
        <taxon>Enterobacterales</taxon>
        <taxon>Yersiniaceae</taxon>
        <taxon>Serratia</taxon>
    </lineage>
</organism>
<accession>A8GBX8</accession>
<protein>
    <recommendedName>
        <fullName evidence="1">Betaine aldehyde dehydrogenase</fullName>
        <shortName evidence="1">BADH</shortName>
        <ecNumber evidence="1">1.2.1.8</ecNumber>
    </recommendedName>
</protein>
<feature type="chain" id="PRO_1000062270" description="Betaine aldehyde dehydrogenase">
    <location>
        <begin position="1"/>
        <end position="490"/>
    </location>
</feature>
<feature type="active site" description="Charge relay system" evidence="1">
    <location>
        <position position="162"/>
    </location>
</feature>
<feature type="active site" description="Proton acceptor" evidence="1">
    <location>
        <position position="252"/>
    </location>
</feature>
<feature type="active site" description="Nucleophile" evidence="1">
    <location>
        <position position="286"/>
    </location>
</feature>
<feature type="active site" description="Charge relay system" evidence="1">
    <location>
        <position position="464"/>
    </location>
</feature>
<feature type="binding site" evidence="1">
    <location>
        <position position="93"/>
    </location>
    <ligand>
        <name>K(+)</name>
        <dbReference type="ChEBI" id="CHEBI:29103"/>
        <label>1</label>
    </ligand>
</feature>
<feature type="binding site" evidence="1">
    <location>
        <begin position="150"/>
        <end position="152"/>
    </location>
    <ligand>
        <name>NAD(+)</name>
        <dbReference type="ChEBI" id="CHEBI:57540"/>
    </ligand>
</feature>
<feature type="binding site" evidence="1">
    <location>
        <begin position="176"/>
        <end position="179"/>
    </location>
    <ligand>
        <name>NAD(+)</name>
        <dbReference type="ChEBI" id="CHEBI:57540"/>
    </ligand>
</feature>
<feature type="binding site" evidence="1">
    <location>
        <position position="180"/>
    </location>
    <ligand>
        <name>K(+)</name>
        <dbReference type="ChEBI" id="CHEBI:29103"/>
        <label>1</label>
    </ligand>
</feature>
<feature type="binding site" evidence="1">
    <location>
        <begin position="230"/>
        <end position="233"/>
    </location>
    <ligand>
        <name>NAD(+)</name>
        <dbReference type="ChEBI" id="CHEBI:57540"/>
    </ligand>
</feature>
<feature type="binding site" evidence="1">
    <location>
        <position position="246"/>
    </location>
    <ligand>
        <name>K(+)</name>
        <dbReference type="ChEBI" id="CHEBI:29103"/>
        <label>2</label>
    </ligand>
</feature>
<feature type="binding site" evidence="1">
    <location>
        <position position="254"/>
    </location>
    <ligand>
        <name>NAD(+)</name>
        <dbReference type="ChEBI" id="CHEBI:57540"/>
    </ligand>
</feature>
<feature type="binding site" description="covalent" evidence="1">
    <location>
        <position position="286"/>
    </location>
    <ligand>
        <name>NAD(+)</name>
        <dbReference type="ChEBI" id="CHEBI:57540"/>
    </ligand>
</feature>
<feature type="binding site" evidence="1">
    <location>
        <position position="387"/>
    </location>
    <ligand>
        <name>NAD(+)</name>
        <dbReference type="ChEBI" id="CHEBI:57540"/>
    </ligand>
</feature>
<feature type="binding site" evidence="1">
    <location>
        <position position="457"/>
    </location>
    <ligand>
        <name>K(+)</name>
        <dbReference type="ChEBI" id="CHEBI:29103"/>
        <label>2</label>
    </ligand>
</feature>
<feature type="binding site" evidence="1">
    <location>
        <position position="460"/>
    </location>
    <ligand>
        <name>K(+)</name>
        <dbReference type="ChEBI" id="CHEBI:29103"/>
        <label>2</label>
    </ligand>
</feature>
<feature type="site" description="Seems to be a necessary countercharge to the potassium cations" evidence="1">
    <location>
        <position position="248"/>
    </location>
</feature>
<feature type="modified residue" description="Cysteine sulfenic acid (-SOH)" evidence="1">
    <location>
        <position position="286"/>
    </location>
</feature>
<sequence>MSRFGLQKLYINGAYVDSTDGKTFNAVNPANGEVLAEIQSASAEDVNRAVASAASGQKVWAAMTAMARSRILRRAVDILRERNDELAALETLDTGKAMSETTAVDIVTGADVLEYYAGLIPSIEGQQIPLRDTSFVYTRREPLGVVAGIGAWNYPIQIALWKSAPALAAGNAMIFKPSEVTSLTALKLAEIYTEAGLPDGVFNVVTGSGAEVGQYLTDHPGIAKVSFTGGVKTGKKVMANASGSTLKEVTMELGGKSPLIIFDDADLDRAADIAMMANFYSSGQVCTNGTRVFVPAALQAQFEAKILERVKRIRLGDPTDPQTNFGPLVSFAHMESVLRFIESGKNSGARLLCGGERVTEGEFAKGAYVAPTVFTDCRDEMEIVREEIFGPVMSILSYQSEEEVVRRANDTTFGLAAGVVTNDLTRAHRVIHQLEAGICWINTWGESAAEMPVGGYKQSGVGRENGLMTLEHYTQIKSVQVELGEYASVF</sequence>